<organism>
    <name type="scientific">Synechococcus sp. (strain JA-2-3B'a(2-13))</name>
    <name type="common">Cyanobacteria bacterium Yellowstone B-Prime</name>
    <dbReference type="NCBI Taxonomy" id="321332"/>
    <lineage>
        <taxon>Bacteria</taxon>
        <taxon>Bacillati</taxon>
        <taxon>Cyanobacteriota</taxon>
        <taxon>Cyanophyceae</taxon>
        <taxon>Synechococcales</taxon>
        <taxon>Synechococcaceae</taxon>
        <taxon>Synechococcus</taxon>
    </lineage>
</organism>
<evidence type="ECO:0000255" key="1">
    <source>
        <dbReference type="HAMAP-Rule" id="MF_00523"/>
    </source>
</evidence>
<evidence type="ECO:0000256" key="2">
    <source>
        <dbReference type="SAM" id="MobiDB-lite"/>
    </source>
</evidence>
<dbReference type="EC" id="2.3.1.191" evidence="1"/>
<dbReference type="EMBL" id="CP000240">
    <property type="protein sequence ID" value="ABD02263.1"/>
    <property type="molecule type" value="Genomic_DNA"/>
</dbReference>
<dbReference type="SMR" id="Q2JLY8"/>
<dbReference type="STRING" id="321332.CYB_1289"/>
<dbReference type="KEGG" id="cyb:CYB_1289"/>
<dbReference type="eggNOG" id="COG1044">
    <property type="taxonomic scope" value="Bacteria"/>
</dbReference>
<dbReference type="HOGENOM" id="CLU_049865_0_0_3"/>
<dbReference type="OrthoDB" id="9784739at2"/>
<dbReference type="UniPathway" id="UPA00973"/>
<dbReference type="Proteomes" id="UP000001938">
    <property type="component" value="Chromosome"/>
</dbReference>
<dbReference type="GO" id="GO:0031470">
    <property type="term" value="C:carboxysome"/>
    <property type="evidence" value="ECO:0007669"/>
    <property type="project" value="UniProtKB-ARBA"/>
</dbReference>
<dbReference type="GO" id="GO:0016020">
    <property type="term" value="C:membrane"/>
    <property type="evidence" value="ECO:0007669"/>
    <property type="project" value="GOC"/>
</dbReference>
<dbReference type="GO" id="GO:0016410">
    <property type="term" value="F:N-acyltransferase activity"/>
    <property type="evidence" value="ECO:0007669"/>
    <property type="project" value="InterPro"/>
</dbReference>
<dbReference type="GO" id="GO:0043886">
    <property type="term" value="F:structural constituent of carboxysome shell"/>
    <property type="evidence" value="ECO:0007669"/>
    <property type="project" value="UniProtKB-ARBA"/>
</dbReference>
<dbReference type="GO" id="GO:0009245">
    <property type="term" value="P:lipid A biosynthetic process"/>
    <property type="evidence" value="ECO:0007669"/>
    <property type="project" value="UniProtKB-UniRule"/>
</dbReference>
<dbReference type="CDD" id="cd03352">
    <property type="entry name" value="LbH_LpxD"/>
    <property type="match status" value="1"/>
</dbReference>
<dbReference type="Gene3D" id="2.160.10.10">
    <property type="entry name" value="Hexapeptide repeat proteins"/>
    <property type="match status" value="1"/>
</dbReference>
<dbReference type="Gene3D" id="3.40.1390.10">
    <property type="entry name" value="MurE/MurF, N-terminal domain"/>
    <property type="match status" value="1"/>
</dbReference>
<dbReference type="HAMAP" id="MF_00523">
    <property type="entry name" value="LpxD"/>
    <property type="match status" value="1"/>
</dbReference>
<dbReference type="InterPro" id="IPR001451">
    <property type="entry name" value="Hexapep"/>
</dbReference>
<dbReference type="InterPro" id="IPR007691">
    <property type="entry name" value="LpxD"/>
</dbReference>
<dbReference type="InterPro" id="IPR011004">
    <property type="entry name" value="Trimer_LpxA-like_sf"/>
</dbReference>
<dbReference type="InterPro" id="IPR020573">
    <property type="entry name" value="UDP_GlcNAc_AcTrfase_non-rep"/>
</dbReference>
<dbReference type="NCBIfam" id="TIGR01853">
    <property type="entry name" value="lipid_A_lpxD"/>
    <property type="match status" value="1"/>
</dbReference>
<dbReference type="NCBIfam" id="NF002060">
    <property type="entry name" value="PRK00892.1"/>
    <property type="match status" value="1"/>
</dbReference>
<dbReference type="PANTHER" id="PTHR43378">
    <property type="entry name" value="UDP-3-O-ACYLGLUCOSAMINE N-ACYLTRANSFERASE"/>
    <property type="match status" value="1"/>
</dbReference>
<dbReference type="PANTHER" id="PTHR43378:SF2">
    <property type="entry name" value="UDP-3-O-ACYLGLUCOSAMINE N-ACYLTRANSFERASE 1, MITOCHONDRIAL-RELATED"/>
    <property type="match status" value="1"/>
</dbReference>
<dbReference type="Pfam" id="PF00132">
    <property type="entry name" value="Hexapep"/>
    <property type="match status" value="2"/>
</dbReference>
<dbReference type="Pfam" id="PF04613">
    <property type="entry name" value="LpxD"/>
    <property type="match status" value="1"/>
</dbReference>
<dbReference type="SUPFAM" id="SSF51161">
    <property type="entry name" value="Trimeric LpxA-like enzymes"/>
    <property type="match status" value="1"/>
</dbReference>
<proteinExistence type="inferred from homology"/>
<accession>Q2JLY8</accession>
<sequence>MQLQEIAQKLGCAYEGDPTLEIHSVASLAEARPGELSFLSEARYLPLLEQTQASAVIVEEGLALPCSIACLRGRDPRLLFAQAIELFYQPYRLPVGIHPTAVIDPSVELGEGVAIGPHAVVMEGVKIGDHTQIHPNVTIYPHVRIGSRCQLFANCVIHERTEIGDDCLIHSGAVIGDDGFGHIPLADGSWRRMLQAGRVVLEDNVEVGSNTTIDRAAVGETRIGRGTKIDNLVQIGHGVRTGSHCLIVAQVGIAGSTQLGHHVILAGQCGLAGHLHIGDGVRVAAQTGVTSDVPAGQTVAGYPHQPIAEWRKSMAVQRHLPELQRTLRKLEARVAKLEQNSTDRAPNAKMLEVGVDPETTCSS</sequence>
<gene>
    <name evidence="1" type="primary">lpxD</name>
    <name type="ordered locus">CYB_1289</name>
</gene>
<name>LPXD_SYNJB</name>
<comment type="function">
    <text evidence="1">Catalyzes the N-acylation of UDP-3-O-acylglucosamine using 3-hydroxyacyl-ACP as the acyl donor. Is involved in the biosynthesis of lipid A, a phosphorylated glycolipid that anchors the lipopolysaccharide to the outer membrane of the cell.</text>
</comment>
<comment type="catalytic activity">
    <reaction evidence="1">
        <text>a UDP-3-O-[(3R)-3-hydroxyacyl]-alpha-D-glucosamine + a (3R)-hydroxyacyl-[ACP] = a UDP-2-N,3-O-bis[(3R)-3-hydroxyacyl]-alpha-D-glucosamine + holo-[ACP] + H(+)</text>
        <dbReference type="Rhea" id="RHEA:53836"/>
        <dbReference type="Rhea" id="RHEA-COMP:9685"/>
        <dbReference type="Rhea" id="RHEA-COMP:9945"/>
        <dbReference type="ChEBI" id="CHEBI:15378"/>
        <dbReference type="ChEBI" id="CHEBI:64479"/>
        <dbReference type="ChEBI" id="CHEBI:78827"/>
        <dbReference type="ChEBI" id="CHEBI:137740"/>
        <dbReference type="ChEBI" id="CHEBI:137748"/>
        <dbReference type="EC" id="2.3.1.191"/>
    </reaction>
</comment>
<comment type="pathway">
    <text evidence="1">Bacterial outer membrane biogenesis; LPS lipid A biosynthesis.</text>
</comment>
<comment type="subunit">
    <text evidence="1">Homotrimer.</text>
</comment>
<comment type="similarity">
    <text evidence="1">Belongs to the transferase hexapeptide repeat family. LpxD subfamily.</text>
</comment>
<protein>
    <recommendedName>
        <fullName evidence="1">UDP-3-O-acylglucosamine N-acyltransferase</fullName>
        <ecNumber evidence="1">2.3.1.191</ecNumber>
    </recommendedName>
</protein>
<keyword id="KW-0012">Acyltransferase</keyword>
<keyword id="KW-0441">Lipid A biosynthesis</keyword>
<keyword id="KW-0444">Lipid biosynthesis</keyword>
<keyword id="KW-0443">Lipid metabolism</keyword>
<keyword id="KW-1185">Reference proteome</keyword>
<keyword id="KW-0677">Repeat</keyword>
<keyword id="KW-0808">Transferase</keyword>
<reference key="1">
    <citation type="journal article" date="2007" name="ISME J.">
        <title>Population level functional diversity in a microbial community revealed by comparative genomic and metagenomic analyses.</title>
        <authorList>
            <person name="Bhaya D."/>
            <person name="Grossman A.R."/>
            <person name="Steunou A.-S."/>
            <person name="Khuri N."/>
            <person name="Cohan F.M."/>
            <person name="Hamamura N."/>
            <person name="Melendrez M.C."/>
            <person name="Bateson M.M."/>
            <person name="Ward D.M."/>
            <person name="Heidelberg J.F."/>
        </authorList>
    </citation>
    <scope>NUCLEOTIDE SEQUENCE [LARGE SCALE GENOMIC DNA]</scope>
    <source>
        <strain>JA-2-3B'a(2-13)</strain>
    </source>
</reference>
<feature type="chain" id="PRO_0000264445" description="UDP-3-O-acylglucosamine N-acyltransferase">
    <location>
        <begin position="1"/>
        <end position="363"/>
    </location>
</feature>
<feature type="region of interest" description="Disordered" evidence="2">
    <location>
        <begin position="338"/>
        <end position="363"/>
    </location>
</feature>
<feature type="active site" description="Proton acceptor" evidence="1">
    <location>
        <position position="237"/>
    </location>
</feature>